<dbReference type="EMBL" id="AB076358">
    <property type="protein sequence ID" value="BAD01545.1"/>
    <property type="molecule type" value="mRNA"/>
</dbReference>
<dbReference type="EMBL" id="AJ566387">
    <property type="protein sequence ID" value="CAD97467.1"/>
    <property type="molecule type" value="mRNA"/>
</dbReference>
<dbReference type="EMBL" id="AL773602">
    <property type="status" value="NOT_ANNOTATED_CDS"/>
    <property type="molecule type" value="Genomic_DNA"/>
</dbReference>
<dbReference type="CCDS" id="CCDS33585.1"/>
<dbReference type="RefSeq" id="NP_859016.1">
    <property type="nucleotide sequence ID" value="NM_181688.3"/>
</dbReference>
<dbReference type="BioGRID" id="131688">
    <property type="interactions" value="26"/>
</dbReference>
<dbReference type="FunCoup" id="P60014">
    <property type="interactions" value="23"/>
</dbReference>
<dbReference type="IntAct" id="P60014">
    <property type="interactions" value="21"/>
</dbReference>
<dbReference type="STRING" id="9606.ENSP00000369438"/>
<dbReference type="iPTMnet" id="P60014"/>
<dbReference type="PhosphoSitePlus" id="P60014"/>
<dbReference type="BioMuta" id="KRTAP10-10"/>
<dbReference type="DMDM" id="38372286"/>
<dbReference type="MassIVE" id="P60014"/>
<dbReference type="PaxDb" id="9606-ENSP00000369438"/>
<dbReference type="PeptideAtlas" id="P60014"/>
<dbReference type="DNASU" id="353333"/>
<dbReference type="Ensembl" id="ENST00000380095.2">
    <property type="protein sequence ID" value="ENSP00000369438.1"/>
    <property type="gene ID" value="ENSG00000221859.2"/>
</dbReference>
<dbReference type="GeneID" id="353333"/>
<dbReference type="KEGG" id="hsa:353333"/>
<dbReference type="MANE-Select" id="ENST00000380095.2">
    <property type="protein sequence ID" value="ENSP00000369438.1"/>
    <property type="RefSeq nucleotide sequence ID" value="NM_181688.3"/>
    <property type="RefSeq protein sequence ID" value="NP_859016.1"/>
</dbReference>
<dbReference type="UCSC" id="uc002zfq.3">
    <property type="organism name" value="human"/>
</dbReference>
<dbReference type="AGR" id="HGNC:22972"/>
<dbReference type="CTD" id="353333"/>
<dbReference type="GeneCards" id="KRTAP10-10"/>
<dbReference type="HGNC" id="HGNC:22972">
    <property type="gene designation" value="KRTAP10-10"/>
</dbReference>
<dbReference type="HPA" id="ENSG00000221859">
    <property type="expression patterns" value="Tissue enriched (skin)"/>
</dbReference>
<dbReference type="neXtProt" id="NX_P60014"/>
<dbReference type="OpenTargets" id="ENSG00000221859"/>
<dbReference type="PharmGKB" id="PA134906562"/>
<dbReference type="VEuPathDB" id="HostDB:ENSG00000221859"/>
<dbReference type="eggNOG" id="KOG4726">
    <property type="taxonomic scope" value="Eukaryota"/>
</dbReference>
<dbReference type="GeneTree" id="ENSGT00940000163845"/>
<dbReference type="HOGENOM" id="CLU_062832_0_0_1"/>
<dbReference type="InParanoid" id="P60014"/>
<dbReference type="OMA" id="ACTDSWR"/>
<dbReference type="OrthoDB" id="9635131at2759"/>
<dbReference type="PAN-GO" id="P60014">
    <property type="GO annotations" value="0 GO annotations based on evolutionary models"/>
</dbReference>
<dbReference type="PhylomeDB" id="P60014"/>
<dbReference type="TreeFam" id="TF351356"/>
<dbReference type="PathwayCommons" id="P60014"/>
<dbReference type="Reactome" id="R-HSA-6805567">
    <property type="pathway name" value="Keratinization"/>
</dbReference>
<dbReference type="SignaLink" id="P60014"/>
<dbReference type="BioGRID-ORCS" id="353333">
    <property type="hits" value="13 hits in 1129 CRISPR screens"/>
</dbReference>
<dbReference type="GenomeRNAi" id="353333"/>
<dbReference type="Pharos" id="P60014">
    <property type="development level" value="Tdark"/>
</dbReference>
<dbReference type="PRO" id="PR:P60014"/>
<dbReference type="Proteomes" id="UP000005640">
    <property type="component" value="Chromosome 21"/>
</dbReference>
<dbReference type="RNAct" id="P60014">
    <property type="molecule type" value="protein"/>
</dbReference>
<dbReference type="Bgee" id="ENSG00000221859">
    <property type="expression patterns" value="Expressed in primordial germ cell in gonad and 15 other cell types or tissues"/>
</dbReference>
<dbReference type="GO" id="GO:0005829">
    <property type="term" value="C:cytosol"/>
    <property type="evidence" value="ECO:0000304"/>
    <property type="project" value="Reactome"/>
</dbReference>
<dbReference type="GO" id="GO:0045095">
    <property type="term" value="C:keratin filament"/>
    <property type="evidence" value="ECO:0007669"/>
    <property type="project" value="InterPro"/>
</dbReference>
<dbReference type="InterPro" id="IPR002494">
    <property type="entry name" value="KAP"/>
</dbReference>
<dbReference type="Pfam" id="PF13885">
    <property type="entry name" value="Keratin_B2_2"/>
    <property type="match status" value="4"/>
</dbReference>
<evidence type="ECO:0000269" key="1">
    <source>
    </source>
</evidence>
<evidence type="ECO:0000269" key="2">
    <source>
    </source>
</evidence>
<evidence type="ECO:0000305" key="3"/>
<feature type="chain" id="PRO_0000185218" description="Keratin-associated protein 10-10">
    <location>
        <begin position="1"/>
        <end position="251"/>
    </location>
</feature>
<feature type="repeat" description="1">
    <location>
        <begin position="26"/>
        <end position="30"/>
    </location>
</feature>
<feature type="repeat" description="2">
    <location>
        <begin position="31"/>
        <end position="35"/>
    </location>
</feature>
<feature type="repeat" description="3">
    <location>
        <begin position="52"/>
        <end position="56"/>
    </location>
</feature>
<feature type="repeat" description="4">
    <location>
        <begin position="84"/>
        <end position="88"/>
    </location>
</feature>
<feature type="repeat" description="5">
    <location>
        <begin position="94"/>
        <end position="98"/>
    </location>
</feature>
<feature type="repeat" description="6">
    <location>
        <begin position="99"/>
        <end position="103"/>
    </location>
</feature>
<feature type="repeat" description="7">
    <location>
        <begin position="104"/>
        <end position="109"/>
    </location>
</feature>
<feature type="repeat" description="8">
    <location>
        <begin position="126"/>
        <end position="130"/>
    </location>
</feature>
<feature type="repeat" description="9">
    <location>
        <begin position="136"/>
        <end position="140"/>
    </location>
</feature>
<feature type="repeat" description="10">
    <location>
        <begin position="146"/>
        <end position="150"/>
    </location>
</feature>
<feature type="repeat" description="11">
    <location>
        <begin position="168"/>
        <end position="172"/>
    </location>
</feature>
<feature type="repeat" description="12">
    <location>
        <begin position="178"/>
        <end position="182"/>
    </location>
</feature>
<feature type="repeat" description="13">
    <location>
        <begin position="183"/>
        <end position="187"/>
    </location>
</feature>
<feature type="repeat" description="14">
    <location>
        <begin position="202"/>
        <end position="206"/>
    </location>
</feature>
<feature type="repeat" description="15">
    <location>
        <begin position="220"/>
        <end position="224"/>
    </location>
</feature>
<feature type="region of interest" description="15 X 5 AA repeats of C-C-X(3)">
    <location>
        <begin position="26"/>
        <end position="224"/>
    </location>
</feature>
<feature type="sequence variant" id="VAR_053463" description="In dbSNP:rs2838602.">
    <original>V</original>
    <variation>D</variation>
    <location>
        <position position="20"/>
    </location>
</feature>
<feature type="sequence variant" id="VAR_017755" description="In dbSNP:rs4818947." evidence="2">
    <original>T</original>
    <variation>P</variation>
    <location>
        <position position="72"/>
    </location>
</feature>
<feature type="sequence variant" id="VAR_060053" description="In dbSNP:rs9306109.">
    <original>T</original>
    <variation>S</variation>
    <location>
        <position position="86"/>
    </location>
</feature>
<feature type="sequence variant" id="VAR_062114" description="In dbSNP:rs60500206.">
    <original>V</original>
    <variation>M</variation>
    <location>
        <position position="116"/>
    </location>
</feature>
<feature type="sequence variant" id="VAR_060054" description="In dbSNP:rs4818948.">
    <original>C</original>
    <variation>S</variation>
    <location>
        <position position="126"/>
    </location>
</feature>
<feature type="sequence variant" id="VAR_060055" description="In dbSNP:rs4818949.">
    <original>Q</original>
    <variation>P</variation>
    <location>
        <position position="129"/>
    </location>
</feature>
<feature type="sequence variant" id="VAR_053464" description="In dbSNP:rs4818950.">
    <original>V</original>
    <variation>M</variation>
    <location>
        <position position="158"/>
    </location>
</feature>
<reference key="1">
    <citation type="journal article" date="2004" name="Genomics">
        <title>A cluster of 21 keratin-associated protein genes within introns of another gene on human chromosome 21q22.3.</title>
        <authorList>
            <person name="Shibuya K."/>
            <person name="Obayashi I."/>
            <person name="Asakawa S."/>
            <person name="Minoshima S."/>
            <person name="Kudoh J."/>
            <person name="Shimizu N."/>
        </authorList>
    </citation>
    <scope>NUCLEOTIDE SEQUENCE [MRNA]</scope>
    <scope>TISSUE SPECIFICITY</scope>
    <scope>VARIANT PRO-72</scope>
    <source>
        <tissue>Hair root</tissue>
    </source>
</reference>
<reference key="2">
    <citation type="journal article" date="2004" name="J. Invest. Dermatol.">
        <title>Hair keratin associated proteins: characterization of a second high sulfur KAP gene domain on human chromosome 21.</title>
        <authorList>
            <person name="Rogers M.A."/>
            <person name="Langbein L."/>
            <person name="Winter H."/>
            <person name="Beckmann I."/>
            <person name="Praetzel S."/>
            <person name="Schweizer J."/>
        </authorList>
    </citation>
    <scope>NUCLEOTIDE SEQUENCE [MRNA]</scope>
    <scope>TISSUE SPECIFICITY</scope>
    <source>
        <tissue>Scalp</tissue>
    </source>
</reference>
<reference key="3">
    <citation type="journal article" date="2000" name="Nature">
        <title>The DNA sequence of human chromosome 21.</title>
        <authorList>
            <person name="Hattori M."/>
            <person name="Fujiyama A."/>
            <person name="Taylor T.D."/>
            <person name="Watanabe H."/>
            <person name="Yada T."/>
            <person name="Park H.-S."/>
            <person name="Toyoda A."/>
            <person name="Ishii K."/>
            <person name="Totoki Y."/>
            <person name="Choi D.-K."/>
            <person name="Groner Y."/>
            <person name="Soeda E."/>
            <person name="Ohki M."/>
            <person name="Takagi T."/>
            <person name="Sakaki Y."/>
            <person name="Taudien S."/>
            <person name="Blechschmidt K."/>
            <person name="Polley A."/>
            <person name="Menzel U."/>
            <person name="Delabar J."/>
            <person name="Kumpf K."/>
            <person name="Lehmann R."/>
            <person name="Patterson D."/>
            <person name="Reichwald K."/>
            <person name="Rump A."/>
            <person name="Schillhabel M."/>
            <person name="Schudy A."/>
            <person name="Zimmermann W."/>
            <person name="Rosenthal A."/>
            <person name="Kudoh J."/>
            <person name="Shibuya K."/>
            <person name="Kawasaki K."/>
            <person name="Asakawa S."/>
            <person name="Shintani A."/>
            <person name="Sasaki T."/>
            <person name="Nagamine K."/>
            <person name="Mitsuyama S."/>
            <person name="Antonarakis S.E."/>
            <person name="Minoshima S."/>
            <person name="Shimizu N."/>
            <person name="Nordsiek G."/>
            <person name="Hornischer K."/>
            <person name="Brandt P."/>
            <person name="Scharfe M."/>
            <person name="Schoen O."/>
            <person name="Desario A."/>
            <person name="Reichelt J."/>
            <person name="Kauer G."/>
            <person name="Bloecker H."/>
            <person name="Ramser J."/>
            <person name="Beck A."/>
            <person name="Klages S."/>
            <person name="Hennig S."/>
            <person name="Riesselmann L."/>
            <person name="Dagand E."/>
            <person name="Wehrmeyer S."/>
            <person name="Borzym K."/>
            <person name="Gardiner K."/>
            <person name="Nizetic D."/>
            <person name="Francis F."/>
            <person name="Lehrach H."/>
            <person name="Reinhardt R."/>
            <person name="Yaspo M.-L."/>
        </authorList>
    </citation>
    <scope>NUCLEOTIDE SEQUENCE [LARGE SCALE GENOMIC DNA]</scope>
</reference>
<accession>P60014</accession>
<sequence length="251" mass="25571">MAASTMSICSSACTDSWRVVDCPESCCEPCCCAPAPSLTLVCTPVSCVSSPCCQTACEPSACQSGYTSSCTTPCYQQSSCQPDCCTSSPCQQACCVPVCCVPVCCVPVCNKPVCFVPTCSESSPSCCQQSSCQPTCCTSSPCQQACCVPVCSKSVCYVPVCSGASTSCCQQSSCQPACCTASCCRPSSSVSLLCHPVCKSTCCVPVPSCGASASSCQPSCCRTASCVSLLCRPVCSRPACYSLCSGQKSSC</sequence>
<proteinExistence type="evidence at protein level"/>
<organism>
    <name type="scientific">Homo sapiens</name>
    <name type="common">Human</name>
    <dbReference type="NCBI Taxonomy" id="9606"/>
    <lineage>
        <taxon>Eukaryota</taxon>
        <taxon>Metazoa</taxon>
        <taxon>Chordata</taxon>
        <taxon>Craniata</taxon>
        <taxon>Vertebrata</taxon>
        <taxon>Euteleostomi</taxon>
        <taxon>Mammalia</taxon>
        <taxon>Eutheria</taxon>
        <taxon>Euarchontoglires</taxon>
        <taxon>Primates</taxon>
        <taxon>Haplorrhini</taxon>
        <taxon>Catarrhini</taxon>
        <taxon>Hominidae</taxon>
        <taxon>Homo</taxon>
    </lineage>
</organism>
<keyword id="KW-0416">Keratin</keyword>
<keyword id="KW-1267">Proteomics identification</keyword>
<keyword id="KW-1185">Reference proteome</keyword>
<keyword id="KW-0677">Repeat</keyword>
<protein>
    <recommendedName>
        <fullName>Keratin-associated protein 10-10</fullName>
    </recommendedName>
    <alternativeName>
        <fullName>High sulfur keratin-associated protein 10.10</fullName>
    </alternativeName>
    <alternativeName>
        <fullName>Keratin-associated protein 10.10</fullName>
    </alternativeName>
    <alternativeName>
        <fullName>Keratin-associated protein 18-10</fullName>
    </alternativeName>
    <alternativeName>
        <fullName>Keratin-associated protein 18.10</fullName>
    </alternativeName>
</protein>
<gene>
    <name type="primary">KRTAP10-10</name>
    <name type="synonym">KAP10.10</name>
    <name type="synonym">KAP18-10</name>
    <name type="synonym">KRTAP10.10</name>
    <name type="synonym">KRTAP18-1</name>
    <name type="synonym">KRTAP18.10</name>
</gene>
<comment type="function">
    <text>In the hair cortex, hair keratin intermediate filaments are embedded in an interfilamentous matrix, consisting of hair keratin-associated proteins (KRTAP), which are essential for the formation of a rigid and resistant hair shaft through their extensive disulfide bond cross-linking with abundant cysteine residues of hair keratins. The matrix proteins include the high-sulfur and high-glycine-tyrosine keratins.</text>
</comment>
<comment type="subunit">
    <text>Interacts with hair keratins.</text>
</comment>
<comment type="interaction">
    <interactant intactId="EBI-11955579">
        <id>P60014</id>
    </interactant>
    <interactant intactId="EBI-4400025">
        <id>Q9Y2T1</id>
        <label>AXIN2</label>
    </interactant>
    <organismsDiffer>false</organismsDiffer>
    <experiments>3</experiments>
</comment>
<comment type="interaction">
    <interactant intactId="EBI-11955579">
        <id>P60014</id>
    </interactant>
    <interactant intactId="EBI-744545">
        <id>Q8NEC5</id>
        <label>CATSPER1</label>
    </interactant>
    <organismsDiffer>false</organismsDiffer>
    <experiments>3</experiments>
</comment>
<comment type="interaction">
    <interactant intactId="EBI-11955579">
        <id>P60014</id>
    </interactant>
    <interactant intactId="EBI-10192698">
        <id>Q02930-3</id>
        <label>CREB5</label>
    </interactant>
    <organismsDiffer>false</organismsDiffer>
    <experiments>3</experiments>
</comment>
<comment type="interaction">
    <interactant intactId="EBI-11955579">
        <id>P60014</id>
    </interactant>
    <interactant intactId="EBI-11045281">
        <id>Q9Y6M4-3</id>
        <label>CSNK1G3</label>
    </interactant>
    <organismsDiffer>false</organismsDiffer>
    <experiments>3</experiments>
</comment>
<comment type="interaction">
    <interactant intactId="EBI-11955579">
        <id>P60014</id>
    </interactant>
    <interactant intactId="EBI-8636823">
        <id>Q9UBR2</id>
        <label>CTSZ</label>
    </interactant>
    <organismsDiffer>false</organismsDiffer>
    <experiments>3</experiments>
</comment>
<comment type="interaction">
    <interactant intactId="EBI-11955579">
        <id>P60014</id>
    </interactant>
    <interactant intactId="EBI-3867333">
        <id>A8MQ03</id>
        <label>CYSRT1</label>
    </interactant>
    <organismsDiffer>false</organismsDiffer>
    <experiments>3</experiments>
</comment>
<comment type="interaction">
    <interactant intactId="EBI-11955579">
        <id>P60014</id>
    </interactant>
    <interactant intactId="EBI-740785">
        <id>P49639</id>
        <label>HOXA1</label>
    </interactant>
    <organismsDiffer>false</organismsDiffer>
    <experiments>3</experiments>
</comment>
<comment type="interaction">
    <interactant intactId="EBI-11955579">
        <id>P60014</id>
    </interactant>
    <interactant intactId="EBI-10171774">
        <id>P60410</id>
        <label>KRTAP10-8</label>
    </interactant>
    <organismsDiffer>false</organismsDiffer>
    <experiments>3</experiments>
</comment>
<comment type="interaction">
    <interactant intactId="EBI-11955579">
        <id>P60014</id>
    </interactant>
    <interactant intactId="EBI-11958132">
        <id>Q9BYR3</id>
        <label>KRTAP4-4</label>
    </interactant>
    <organismsDiffer>false</organismsDiffer>
    <experiments>3</experiments>
</comment>
<comment type="interaction">
    <interactant intactId="EBI-11955579">
        <id>P60014</id>
    </interactant>
    <interactant intactId="EBI-11987425">
        <id>Q6L8G8</id>
        <label>KRTAP5-7</label>
    </interactant>
    <organismsDiffer>false</organismsDiffer>
    <experiments>3</experiments>
</comment>
<comment type="interaction">
    <interactant intactId="EBI-11955579">
        <id>P60014</id>
    </interactant>
    <interactant intactId="EBI-3958099">
        <id>P26371</id>
        <label>KRTAP5-9</label>
    </interactant>
    <organismsDiffer>false</organismsDiffer>
    <experiments>3</experiments>
</comment>
<comment type="interaction">
    <interactant intactId="EBI-11955579">
        <id>P60014</id>
    </interactant>
    <interactant intactId="EBI-1043191">
        <id>Q9BYQ3</id>
        <label>KRTAP9-3</label>
    </interactant>
    <organismsDiffer>false</organismsDiffer>
    <experiments>3</experiments>
</comment>
<comment type="interaction">
    <interactant intactId="EBI-11955579">
        <id>P60014</id>
    </interactant>
    <interactant intactId="EBI-11955335">
        <id>Q5T753</id>
        <label>LCE1E</label>
    </interactant>
    <organismsDiffer>false</organismsDiffer>
    <experiments>3</experiments>
</comment>
<comment type="interaction">
    <interactant intactId="EBI-11955579">
        <id>P60014</id>
    </interactant>
    <interactant intactId="EBI-11958008">
        <id>Q5T754</id>
        <label>LCE1F</label>
    </interactant>
    <organismsDiffer>false</organismsDiffer>
    <experiments>3</experiments>
</comment>
<comment type="interaction">
    <interactant intactId="EBI-11955579">
        <id>P60014</id>
    </interactant>
    <interactant intactId="EBI-11973993">
        <id>Q5TA81</id>
        <label>LCE2C</label>
    </interactant>
    <organismsDiffer>false</organismsDiffer>
    <experiments>3</experiments>
</comment>
<comment type="interaction">
    <interactant intactId="EBI-11955579">
        <id>P60014</id>
    </interactant>
    <interactant intactId="EBI-11974495">
        <id>Q5TA77</id>
        <label>LCE3B</label>
    </interactant>
    <organismsDiffer>false</organismsDiffer>
    <experiments>3</experiments>
</comment>
<comment type="interaction">
    <interactant intactId="EBI-11955579">
        <id>P60014</id>
    </interactant>
    <interactant intactId="EBI-1246238">
        <id>P17568</id>
        <label>NDUFB7</label>
    </interactant>
    <organismsDiffer>false</organismsDiffer>
    <experiments>3</experiments>
</comment>
<comment type="interaction">
    <interactant intactId="EBI-11955579">
        <id>P60014</id>
    </interactant>
    <interactant intactId="EBI-22310682">
        <id>P0DPK4</id>
        <label>NOTCH2NLC</label>
    </interactant>
    <organismsDiffer>false</organismsDiffer>
    <experiments>3</experiments>
</comment>
<comment type="interaction">
    <interactant intactId="EBI-11955579">
        <id>P60014</id>
    </interactant>
    <interactant intactId="EBI-742388">
        <id>Q9H8W4</id>
        <label>PLEKHF2</label>
    </interactant>
    <organismsDiffer>false</organismsDiffer>
    <experiments>3</experiments>
</comment>
<comment type="interaction">
    <interactant intactId="EBI-11955579">
        <id>P60014</id>
    </interactant>
    <interactant intactId="EBI-751409">
        <id>Q8WTR7</id>
        <label>ZNF473</label>
    </interactant>
    <organismsDiffer>false</organismsDiffer>
    <experiments>3</experiments>
</comment>
<comment type="interaction">
    <interactant intactId="EBI-11955579">
        <id>P60014</id>
    </interactant>
    <interactant intactId="EBI-6427977">
        <id>Q96SQ5</id>
        <label>ZNF587</label>
    </interactant>
    <organismsDiffer>false</organismsDiffer>
    <experiments>3</experiments>
</comment>
<comment type="tissue specificity">
    <text evidence="1 2">Restricted to a narrow region of the hair fiber cuticle, lying approximately 20 cell layers above the apex of the dermal papilla of the hair root; not detected in any other tissues.</text>
</comment>
<comment type="similarity">
    <text evidence="3">Belongs to the KRTAP type 10 family.</text>
</comment>
<name>KR10A_HUMAN</name>